<evidence type="ECO:0000250" key="1"/>
<evidence type="ECO:0000255" key="2">
    <source>
        <dbReference type="HAMAP-Rule" id="MF_00100"/>
    </source>
</evidence>
<evidence type="ECO:0000256" key="3">
    <source>
        <dbReference type="SAM" id="MobiDB-lite"/>
    </source>
</evidence>
<dbReference type="EMBL" id="CP000934">
    <property type="protein sequence ID" value="ACE84775.1"/>
    <property type="molecule type" value="Genomic_DNA"/>
</dbReference>
<dbReference type="RefSeq" id="WP_012486117.1">
    <property type="nucleotide sequence ID" value="NC_010995.1"/>
</dbReference>
<dbReference type="SMR" id="B3PI96"/>
<dbReference type="STRING" id="498211.CJA_0436"/>
<dbReference type="KEGG" id="cja:CJA_0436"/>
<dbReference type="eggNOG" id="COG0532">
    <property type="taxonomic scope" value="Bacteria"/>
</dbReference>
<dbReference type="HOGENOM" id="CLU_006301_6_0_6"/>
<dbReference type="OrthoDB" id="9811804at2"/>
<dbReference type="Proteomes" id="UP000001036">
    <property type="component" value="Chromosome"/>
</dbReference>
<dbReference type="GO" id="GO:0005829">
    <property type="term" value="C:cytosol"/>
    <property type="evidence" value="ECO:0007669"/>
    <property type="project" value="TreeGrafter"/>
</dbReference>
<dbReference type="GO" id="GO:0005525">
    <property type="term" value="F:GTP binding"/>
    <property type="evidence" value="ECO:0007669"/>
    <property type="project" value="UniProtKB-KW"/>
</dbReference>
<dbReference type="GO" id="GO:0003924">
    <property type="term" value="F:GTPase activity"/>
    <property type="evidence" value="ECO:0007669"/>
    <property type="project" value="UniProtKB-UniRule"/>
</dbReference>
<dbReference type="GO" id="GO:0003743">
    <property type="term" value="F:translation initiation factor activity"/>
    <property type="evidence" value="ECO:0007669"/>
    <property type="project" value="UniProtKB-UniRule"/>
</dbReference>
<dbReference type="CDD" id="cd01887">
    <property type="entry name" value="IF2_eIF5B"/>
    <property type="match status" value="1"/>
</dbReference>
<dbReference type="CDD" id="cd03702">
    <property type="entry name" value="IF2_mtIF2_II"/>
    <property type="match status" value="1"/>
</dbReference>
<dbReference type="CDD" id="cd03692">
    <property type="entry name" value="mtIF2_IVc"/>
    <property type="match status" value="1"/>
</dbReference>
<dbReference type="FunFam" id="2.40.30.10:FF:000007">
    <property type="entry name" value="Translation initiation factor IF-2"/>
    <property type="match status" value="1"/>
</dbReference>
<dbReference type="FunFam" id="2.40.30.10:FF:000008">
    <property type="entry name" value="Translation initiation factor IF-2"/>
    <property type="match status" value="1"/>
</dbReference>
<dbReference type="FunFam" id="3.40.50.10050:FF:000001">
    <property type="entry name" value="Translation initiation factor IF-2"/>
    <property type="match status" value="1"/>
</dbReference>
<dbReference type="FunFam" id="3.40.50.300:FF:000019">
    <property type="entry name" value="Translation initiation factor IF-2"/>
    <property type="match status" value="1"/>
</dbReference>
<dbReference type="Gene3D" id="3.40.50.300">
    <property type="entry name" value="P-loop containing nucleotide triphosphate hydrolases"/>
    <property type="match status" value="1"/>
</dbReference>
<dbReference type="Gene3D" id="3.30.56.50">
    <property type="entry name" value="Putative DNA-binding domain, N-terminal subdomain of bacterial translation initiation factor IF2"/>
    <property type="match status" value="1"/>
</dbReference>
<dbReference type="Gene3D" id="2.40.30.10">
    <property type="entry name" value="Translation factors"/>
    <property type="match status" value="2"/>
</dbReference>
<dbReference type="Gene3D" id="3.40.50.10050">
    <property type="entry name" value="Translation initiation factor IF- 2, domain 3"/>
    <property type="match status" value="1"/>
</dbReference>
<dbReference type="HAMAP" id="MF_00100_B">
    <property type="entry name" value="IF_2_B"/>
    <property type="match status" value="1"/>
</dbReference>
<dbReference type="InterPro" id="IPR009061">
    <property type="entry name" value="DNA-bd_dom_put_sf"/>
</dbReference>
<dbReference type="InterPro" id="IPR053905">
    <property type="entry name" value="EF-G-like_DII"/>
</dbReference>
<dbReference type="InterPro" id="IPR013575">
    <property type="entry name" value="IF2_assoc_dom_bac"/>
</dbReference>
<dbReference type="InterPro" id="IPR044145">
    <property type="entry name" value="IF2_II"/>
</dbReference>
<dbReference type="InterPro" id="IPR006847">
    <property type="entry name" value="IF2_N"/>
</dbReference>
<dbReference type="InterPro" id="IPR027417">
    <property type="entry name" value="P-loop_NTPase"/>
</dbReference>
<dbReference type="InterPro" id="IPR005225">
    <property type="entry name" value="Small_GTP-bd"/>
</dbReference>
<dbReference type="InterPro" id="IPR000795">
    <property type="entry name" value="T_Tr_GTP-bd_dom"/>
</dbReference>
<dbReference type="InterPro" id="IPR000178">
    <property type="entry name" value="TF_IF2_bacterial-like"/>
</dbReference>
<dbReference type="InterPro" id="IPR015760">
    <property type="entry name" value="TIF_IF2"/>
</dbReference>
<dbReference type="InterPro" id="IPR023115">
    <property type="entry name" value="TIF_IF2_dom3"/>
</dbReference>
<dbReference type="InterPro" id="IPR036925">
    <property type="entry name" value="TIF_IF2_dom3_sf"/>
</dbReference>
<dbReference type="InterPro" id="IPR009000">
    <property type="entry name" value="Transl_B-barrel_sf"/>
</dbReference>
<dbReference type="NCBIfam" id="TIGR00487">
    <property type="entry name" value="IF-2"/>
    <property type="match status" value="1"/>
</dbReference>
<dbReference type="NCBIfam" id="TIGR00231">
    <property type="entry name" value="small_GTP"/>
    <property type="match status" value="1"/>
</dbReference>
<dbReference type="PANTHER" id="PTHR43381:SF5">
    <property type="entry name" value="TR-TYPE G DOMAIN-CONTAINING PROTEIN"/>
    <property type="match status" value="1"/>
</dbReference>
<dbReference type="PANTHER" id="PTHR43381">
    <property type="entry name" value="TRANSLATION INITIATION FACTOR IF-2-RELATED"/>
    <property type="match status" value="1"/>
</dbReference>
<dbReference type="Pfam" id="PF22042">
    <property type="entry name" value="EF-G_D2"/>
    <property type="match status" value="1"/>
</dbReference>
<dbReference type="Pfam" id="PF00009">
    <property type="entry name" value="GTP_EFTU"/>
    <property type="match status" value="1"/>
</dbReference>
<dbReference type="Pfam" id="PF11987">
    <property type="entry name" value="IF-2"/>
    <property type="match status" value="1"/>
</dbReference>
<dbReference type="Pfam" id="PF08364">
    <property type="entry name" value="IF2_assoc"/>
    <property type="match status" value="1"/>
</dbReference>
<dbReference type="Pfam" id="PF04760">
    <property type="entry name" value="IF2_N"/>
    <property type="match status" value="2"/>
</dbReference>
<dbReference type="SUPFAM" id="SSF52156">
    <property type="entry name" value="Initiation factor IF2/eIF5b, domain 3"/>
    <property type="match status" value="1"/>
</dbReference>
<dbReference type="SUPFAM" id="SSF52540">
    <property type="entry name" value="P-loop containing nucleoside triphosphate hydrolases"/>
    <property type="match status" value="1"/>
</dbReference>
<dbReference type="SUPFAM" id="SSF46955">
    <property type="entry name" value="Putative DNA-binding domain"/>
    <property type="match status" value="1"/>
</dbReference>
<dbReference type="SUPFAM" id="SSF50447">
    <property type="entry name" value="Translation proteins"/>
    <property type="match status" value="2"/>
</dbReference>
<dbReference type="PROSITE" id="PS51722">
    <property type="entry name" value="G_TR_2"/>
    <property type="match status" value="1"/>
</dbReference>
<dbReference type="PROSITE" id="PS01176">
    <property type="entry name" value="IF2"/>
    <property type="match status" value="1"/>
</dbReference>
<keyword id="KW-0963">Cytoplasm</keyword>
<keyword id="KW-0342">GTP-binding</keyword>
<keyword id="KW-0396">Initiation factor</keyword>
<keyword id="KW-0547">Nucleotide-binding</keyword>
<keyword id="KW-0648">Protein biosynthesis</keyword>
<keyword id="KW-1185">Reference proteome</keyword>
<gene>
    <name evidence="2" type="primary">infB</name>
    <name type="ordered locus">CJA_0436</name>
</gene>
<name>IF2_CELJU</name>
<reference key="1">
    <citation type="journal article" date="2008" name="J. Bacteriol.">
        <title>Insights into plant cell wall degradation from the genome sequence of the soil bacterium Cellvibrio japonicus.</title>
        <authorList>
            <person name="DeBoy R.T."/>
            <person name="Mongodin E.F."/>
            <person name="Fouts D.E."/>
            <person name="Tailford L.E."/>
            <person name="Khouri H."/>
            <person name="Emerson J.B."/>
            <person name="Mohamoud Y."/>
            <person name="Watkins K."/>
            <person name="Henrissat B."/>
            <person name="Gilbert H.J."/>
            <person name="Nelson K.E."/>
        </authorList>
    </citation>
    <scope>NUCLEOTIDE SEQUENCE [LARGE SCALE GENOMIC DNA]</scope>
    <source>
        <strain>Ueda107</strain>
    </source>
</reference>
<feature type="chain" id="PRO_1000093767" description="Translation initiation factor IF-2">
    <location>
        <begin position="1"/>
        <end position="930"/>
    </location>
</feature>
<feature type="domain" description="tr-type G">
    <location>
        <begin position="431"/>
        <end position="600"/>
    </location>
</feature>
<feature type="region of interest" description="Disordered" evidence="3">
    <location>
        <begin position="160"/>
        <end position="179"/>
    </location>
</feature>
<feature type="region of interest" description="Disordered" evidence="3">
    <location>
        <begin position="208"/>
        <end position="301"/>
    </location>
</feature>
<feature type="region of interest" description="G1" evidence="1">
    <location>
        <begin position="440"/>
        <end position="447"/>
    </location>
</feature>
<feature type="region of interest" description="G2" evidence="1">
    <location>
        <begin position="465"/>
        <end position="469"/>
    </location>
</feature>
<feature type="region of interest" description="G3" evidence="1">
    <location>
        <begin position="486"/>
        <end position="489"/>
    </location>
</feature>
<feature type="region of interest" description="G4" evidence="1">
    <location>
        <begin position="540"/>
        <end position="543"/>
    </location>
</feature>
<feature type="region of interest" description="G5" evidence="1">
    <location>
        <begin position="576"/>
        <end position="578"/>
    </location>
</feature>
<feature type="compositionally biased region" description="Basic and acidic residues" evidence="3">
    <location>
        <begin position="208"/>
        <end position="227"/>
    </location>
</feature>
<feature type="compositionally biased region" description="Basic residues" evidence="3">
    <location>
        <begin position="263"/>
        <end position="272"/>
    </location>
</feature>
<feature type="compositionally biased region" description="Basic residues" evidence="3">
    <location>
        <begin position="288"/>
        <end position="301"/>
    </location>
</feature>
<feature type="binding site" evidence="2">
    <location>
        <begin position="440"/>
        <end position="447"/>
    </location>
    <ligand>
        <name>GTP</name>
        <dbReference type="ChEBI" id="CHEBI:37565"/>
    </ligand>
</feature>
<feature type="binding site" evidence="2">
    <location>
        <begin position="486"/>
        <end position="490"/>
    </location>
    <ligand>
        <name>GTP</name>
        <dbReference type="ChEBI" id="CHEBI:37565"/>
    </ligand>
</feature>
<feature type="binding site" evidence="2">
    <location>
        <begin position="540"/>
        <end position="543"/>
    </location>
    <ligand>
        <name>GTP</name>
        <dbReference type="ChEBI" id="CHEBI:37565"/>
    </ligand>
</feature>
<comment type="function">
    <text evidence="2">One of the essential components for the initiation of protein synthesis. Protects formylmethionyl-tRNA from spontaneous hydrolysis and promotes its binding to the 30S ribosomal subunits. Also involved in the hydrolysis of GTP during the formation of the 70S ribosomal complex.</text>
</comment>
<comment type="subcellular location">
    <subcellularLocation>
        <location evidence="2">Cytoplasm</location>
    </subcellularLocation>
</comment>
<comment type="similarity">
    <text evidence="2">Belongs to the TRAFAC class translation factor GTPase superfamily. Classic translation factor GTPase family. IF-2 subfamily.</text>
</comment>
<organism>
    <name type="scientific">Cellvibrio japonicus (strain Ueda107)</name>
    <name type="common">Pseudomonas fluorescens subsp. cellulosa</name>
    <dbReference type="NCBI Taxonomy" id="498211"/>
    <lineage>
        <taxon>Bacteria</taxon>
        <taxon>Pseudomonadati</taxon>
        <taxon>Pseudomonadota</taxon>
        <taxon>Gammaproteobacteria</taxon>
        <taxon>Cellvibrionales</taxon>
        <taxon>Cellvibrionaceae</taxon>
        <taxon>Cellvibrio</taxon>
    </lineage>
</organism>
<accession>B3PI96</accession>
<sequence>MAEVTVNELATSIGAPVERLLKQMQEAGLQHKTASAKVSDEEKQRLLAYLKGSHGEAAVEPRKITLQRKTTTTIKTGTGNAKKTVNVEVRKKRTYVKREDDVVDNTQAAQSQEQDDELASTVVEEVQQAEPSVVPVVDVAPEPEPEPVVEEVDVAAEEAEPVEAAVDTSAPTRFSFTDGIEEKRRAAIERRQAEEAARQAELKAIEEAKRAAEEAKRTQPRAEKPADKSAAAGKGAKPDNRQPAKGKQAPVAVPVEREDAKHGHGHKKHHHGRNDDDFDDDSADRGNKRGAGKAVKKAAAPKKSSKIDLLDFVGDDSEDSDVLARRSHIRAHHKKNNKHAFKKPTTQIVHEIDIPETIAVSELAQRLTIKVGELIKRLMKMGVMASMNEQIDQDTAVLIVEELGHKANLVSENDIEHALEKSLETAGELTTRAPVVTVMGHVDHGKTSLLDYIREAKVAAGEAGGITQHIGAYRVTTSRGEITFLDTPGHAAFTAMRARGAKATDVVILVVAADDGVMPQTEEAIMHARAAEVPIVVAINKCDKPSADPDRVTNELVAKGVIPEAYGGDTQFVQVSAHTGQGIDELLEAISLQAEVLELTAVTNAAAKGVVIEARVDKGRGTVATVLVQQGTLKQGDLILAGQSYGRVRAMVNERGEQVKEAGPSTPVEILGLDMPPSAGDDFVVLDDERKAREVAAFRAEKERKEKLARFQAAKLENMFSNMEAGQKKTLTVVIKADVRGSLEAIQASLADIGNDEVQVNVISSGIGGITENDVNLAVTSGAIIVGFNVRADGATRRLAETEGVDIRYYSIIYQLLDEVKAALSGMLDPERVETIVGIANVREVFNSPKFGQVAGCMVVEGTVYRNKPIRVLRDNVVIFTGELESLRRFKDDVNEVRNGFECGIGVKNYDVKVGDQIEVYEVKEVARQL</sequence>
<proteinExistence type="inferred from homology"/>
<protein>
    <recommendedName>
        <fullName evidence="2">Translation initiation factor IF-2</fullName>
    </recommendedName>
</protein>